<feature type="signal peptide" description="Tat-type signal" evidence="1">
    <location>
        <begin position="1"/>
        <end position="31"/>
    </location>
</feature>
<feature type="chain" id="PRO_0000045986" description="Periplasmic nitrate reductase" evidence="1">
    <location>
        <begin position="32"/>
        <end position="828"/>
    </location>
</feature>
<feature type="domain" description="4Fe-4S Mo/W bis-MGD-type" evidence="1">
    <location>
        <begin position="39"/>
        <end position="95"/>
    </location>
</feature>
<feature type="binding site" evidence="1">
    <location>
        <position position="46"/>
    </location>
    <ligand>
        <name>[4Fe-4S] cluster</name>
        <dbReference type="ChEBI" id="CHEBI:49883"/>
    </ligand>
</feature>
<feature type="binding site" evidence="1">
    <location>
        <position position="49"/>
    </location>
    <ligand>
        <name>[4Fe-4S] cluster</name>
        <dbReference type="ChEBI" id="CHEBI:49883"/>
    </ligand>
</feature>
<feature type="binding site" evidence="1">
    <location>
        <position position="53"/>
    </location>
    <ligand>
        <name>[4Fe-4S] cluster</name>
        <dbReference type="ChEBI" id="CHEBI:49883"/>
    </ligand>
</feature>
<feature type="binding site" evidence="1">
    <location>
        <position position="81"/>
    </location>
    <ligand>
        <name>[4Fe-4S] cluster</name>
        <dbReference type="ChEBI" id="CHEBI:49883"/>
    </ligand>
</feature>
<feature type="binding site" evidence="1">
    <location>
        <position position="83"/>
    </location>
    <ligand>
        <name>Mo-bis(molybdopterin guanine dinucleotide)</name>
        <dbReference type="ChEBI" id="CHEBI:60539"/>
    </ligand>
</feature>
<feature type="binding site" evidence="1">
    <location>
        <position position="150"/>
    </location>
    <ligand>
        <name>Mo-bis(molybdopterin guanine dinucleotide)</name>
        <dbReference type="ChEBI" id="CHEBI:60539"/>
    </ligand>
</feature>
<feature type="binding site" evidence="1">
    <location>
        <position position="175"/>
    </location>
    <ligand>
        <name>Mo-bis(molybdopterin guanine dinucleotide)</name>
        <dbReference type="ChEBI" id="CHEBI:60539"/>
    </ligand>
</feature>
<feature type="binding site" evidence="1">
    <location>
        <position position="179"/>
    </location>
    <ligand>
        <name>Mo-bis(molybdopterin guanine dinucleotide)</name>
        <dbReference type="ChEBI" id="CHEBI:60539"/>
    </ligand>
</feature>
<feature type="binding site" evidence="1">
    <location>
        <begin position="212"/>
        <end position="219"/>
    </location>
    <ligand>
        <name>Mo-bis(molybdopterin guanine dinucleotide)</name>
        <dbReference type="ChEBI" id="CHEBI:60539"/>
    </ligand>
</feature>
<feature type="binding site" evidence="1">
    <location>
        <begin position="243"/>
        <end position="247"/>
    </location>
    <ligand>
        <name>Mo-bis(molybdopterin guanine dinucleotide)</name>
        <dbReference type="ChEBI" id="CHEBI:60539"/>
    </ligand>
</feature>
<feature type="binding site" evidence="1">
    <location>
        <begin position="262"/>
        <end position="264"/>
    </location>
    <ligand>
        <name>Mo-bis(molybdopterin guanine dinucleotide)</name>
        <dbReference type="ChEBI" id="CHEBI:60539"/>
    </ligand>
</feature>
<feature type="binding site" evidence="1">
    <location>
        <position position="372"/>
    </location>
    <ligand>
        <name>Mo-bis(molybdopterin guanine dinucleotide)</name>
        <dbReference type="ChEBI" id="CHEBI:60539"/>
    </ligand>
</feature>
<feature type="binding site" evidence="1">
    <location>
        <position position="376"/>
    </location>
    <ligand>
        <name>Mo-bis(molybdopterin guanine dinucleotide)</name>
        <dbReference type="ChEBI" id="CHEBI:60539"/>
    </ligand>
</feature>
<feature type="binding site" evidence="1">
    <location>
        <position position="482"/>
    </location>
    <ligand>
        <name>Mo-bis(molybdopterin guanine dinucleotide)</name>
        <dbReference type="ChEBI" id="CHEBI:60539"/>
    </ligand>
</feature>
<feature type="binding site" evidence="1">
    <location>
        <begin position="508"/>
        <end position="509"/>
    </location>
    <ligand>
        <name>Mo-bis(molybdopterin guanine dinucleotide)</name>
        <dbReference type="ChEBI" id="CHEBI:60539"/>
    </ligand>
</feature>
<feature type="binding site" evidence="1">
    <location>
        <position position="531"/>
    </location>
    <ligand>
        <name>Mo-bis(molybdopterin guanine dinucleotide)</name>
        <dbReference type="ChEBI" id="CHEBI:60539"/>
    </ligand>
</feature>
<feature type="binding site" evidence="1">
    <location>
        <position position="558"/>
    </location>
    <ligand>
        <name>Mo-bis(molybdopterin guanine dinucleotide)</name>
        <dbReference type="ChEBI" id="CHEBI:60539"/>
    </ligand>
</feature>
<feature type="binding site" evidence="1">
    <location>
        <begin position="718"/>
        <end position="727"/>
    </location>
    <ligand>
        <name>Mo-bis(molybdopterin guanine dinucleotide)</name>
        <dbReference type="ChEBI" id="CHEBI:60539"/>
    </ligand>
</feature>
<feature type="binding site" evidence="1">
    <location>
        <position position="794"/>
    </location>
    <ligand>
        <name>substrate</name>
    </ligand>
</feature>
<feature type="binding site" evidence="1">
    <location>
        <position position="802"/>
    </location>
    <ligand>
        <name>Mo-bis(molybdopterin guanine dinucleotide)</name>
        <dbReference type="ChEBI" id="CHEBI:60539"/>
    </ligand>
</feature>
<feature type="binding site" evidence="1">
    <location>
        <position position="819"/>
    </location>
    <ligand>
        <name>Mo-bis(molybdopterin guanine dinucleotide)</name>
        <dbReference type="ChEBI" id="CHEBI:60539"/>
    </ligand>
</feature>
<evidence type="ECO:0000255" key="1">
    <source>
        <dbReference type="HAMAP-Rule" id="MF_01630"/>
    </source>
</evidence>
<evidence type="ECO:0000305" key="2"/>
<proteinExistence type="inferred from homology"/>
<organism>
    <name type="scientific">Escherichia coli O6:H1 (strain CFT073 / ATCC 700928 / UPEC)</name>
    <dbReference type="NCBI Taxonomy" id="199310"/>
    <lineage>
        <taxon>Bacteria</taxon>
        <taxon>Pseudomonadati</taxon>
        <taxon>Pseudomonadota</taxon>
        <taxon>Gammaproteobacteria</taxon>
        <taxon>Enterobacterales</taxon>
        <taxon>Enterobacteriaceae</taxon>
        <taxon>Escherichia</taxon>
    </lineage>
</organism>
<name>NAPA_ECOL6</name>
<sequence length="828" mass="93056">MKLSRRSFMKANAVAAAAAAAGLSVPGVARAVVGQQEAIKWDKAPCRFCGTGCGVLVGTQQGRVVACQGDPDAPVNRGLNCIKGYFLPKIMYGKDRLTQPLLRMKNGKYDKEGEFTPITWDQAFDVMEEKFKTALKEKGPESIGMFGSGQWTIWEGYAASKLFKAGFRSNNIDPNARHCMASAVVGFMRTFGMDEPMGCYDDIEQADAFVLWGANMAEMHPILWSRITNRRLSNQNVTVAVLSTYQHRSFELADNGIIFTPQSDLVILNYIANYIIQNNAINQDFFSKHVNLRKGATDIGYGLRPTHPLEKAAKNPGSDASEPMSFEDYKAFVAEYTLEKTAEMTGVPKDQLEQLAQLYADPNKKVISYWTMGFNQHTRGVWANNLVYNLHLLTGKISQPGCGPFSLTGQPSACGTAREVGTFAHRLPADMVVTNEKHRDICEKKWNIPSGTIPAKIGLHAVAQDRALKDGKLNVYWTMCTNNMQAGPNINEERMPGWRDPRNFIIVSDPYPTVSALAADLILPTAMWVEKEGAYGNAERRTQFWRQQVQAPGEAKSDLWQLVQFSRRFKTEEVWPEELLAKKPELRGKTLYEVLYATPEVSKFPVSELAEDQLNDESRELGFYLQKGLFEEYAWFGRGHGHDLAPFDDYHKARGLRWPVVNGKETQWRYSEGNDPYVKAGEGYKFYGKPDGKAVIFALPFEPAAEAPDEEYDLWLSTGRVLEHWHTGSMTRRVPELHRAFPEAVLFIHPLDAKARDLRRGDKVKVVSRRGEVISIVETRGRNRPPQGLVYMPFFDAAQLVNKLTLDATDPLSKETDFKKCAVKLEKV</sequence>
<dbReference type="EC" id="1.9.6.1" evidence="1"/>
<dbReference type="EMBL" id="AE014075">
    <property type="protein sequence ID" value="AAN81199.1"/>
    <property type="molecule type" value="Genomic_DNA"/>
</dbReference>
<dbReference type="RefSeq" id="WP_000778067.1">
    <property type="nucleotide sequence ID" value="NZ_CP051263.1"/>
</dbReference>
<dbReference type="SMR" id="Q8CVW4"/>
<dbReference type="STRING" id="199310.c2745"/>
<dbReference type="GeneID" id="93774972"/>
<dbReference type="KEGG" id="ecc:c2745"/>
<dbReference type="eggNOG" id="COG0243">
    <property type="taxonomic scope" value="Bacteria"/>
</dbReference>
<dbReference type="HOGENOM" id="CLU_000422_13_4_6"/>
<dbReference type="BioCyc" id="ECOL199310:C2745-MONOMER"/>
<dbReference type="Proteomes" id="UP000001410">
    <property type="component" value="Chromosome"/>
</dbReference>
<dbReference type="GO" id="GO:0016020">
    <property type="term" value="C:membrane"/>
    <property type="evidence" value="ECO:0007669"/>
    <property type="project" value="TreeGrafter"/>
</dbReference>
<dbReference type="GO" id="GO:0009325">
    <property type="term" value="C:nitrate reductase complex"/>
    <property type="evidence" value="ECO:0007669"/>
    <property type="project" value="TreeGrafter"/>
</dbReference>
<dbReference type="GO" id="GO:0042597">
    <property type="term" value="C:periplasmic space"/>
    <property type="evidence" value="ECO:0007669"/>
    <property type="project" value="UniProtKB-SubCell"/>
</dbReference>
<dbReference type="GO" id="GO:0051539">
    <property type="term" value="F:4 iron, 4 sulfur cluster binding"/>
    <property type="evidence" value="ECO:0007669"/>
    <property type="project" value="UniProtKB-KW"/>
</dbReference>
<dbReference type="GO" id="GO:0009055">
    <property type="term" value="F:electron transfer activity"/>
    <property type="evidence" value="ECO:0007669"/>
    <property type="project" value="UniProtKB-UniRule"/>
</dbReference>
<dbReference type="GO" id="GO:0005506">
    <property type="term" value="F:iron ion binding"/>
    <property type="evidence" value="ECO:0007669"/>
    <property type="project" value="UniProtKB-UniRule"/>
</dbReference>
<dbReference type="GO" id="GO:0030151">
    <property type="term" value="F:molybdenum ion binding"/>
    <property type="evidence" value="ECO:0007669"/>
    <property type="project" value="InterPro"/>
</dbReference>
<dbReference type="GO" id="GO:0043546">
    <property type="term" value="F:molybdopterin cofactor binding"/>
    <property type="evidence" value="ECO:0007669"/>
    <property type="project" value="InterPro"/>
</dbReference>
<dbReference type="GO" id="GO:0050140">
    <property type="term" value="F:nitrate reductase (cytochrome) activity"/>
    <property type="evidence" value="ECO:0007669"/>
    <property type="project" value="UniProtKB-EC"/>
</dbReference>
<dbReference type="GO" id="GO:0045333">
    <property type="term" value="P:cellular respiration"/>
    <property type="evidence" value="ECO:0007669"/>
    <property type="project" value="UniProtKB-ARBA"/>
</dbReference>
<dbReference type="GO" id="GO:0006777">
    <property type="term" value="P:Mo-molybdopterin cofactor biosynthetic process"/>
    <property type="evidence" value="ECO:0007669"/>
    <property type="project" value="UniProtKB-UniRule"/>
</dbReference>
<dbReference type="GO" id="GO:0042128">
    <property type="term" value="P:nitrate assimilation"/>
    <property type="evidence" value="ECO:0007669"/>
    <property type="project" value="UniProtKB-UniRule"/>
</dbReference>
<dbReference type="CDD" id="cd02791">
    <property type="entry name" value="MopB_CT_Nitrate-R-NapA-like"/>
    <property type="match status" value="1"/>
</dbReference>
<dbReference type="CDD" id="cd02754">
    <property type="entry name" value="MopB_Nitrate-R-NapA-like"/>
    <property type="match status" value="1"/>
</dbReference>
<dbReference type="FunFam" id="2.40.40.20:FF:000005">
    <property type="entry name" value="Periplasmic nitrate reductase"/>
    <property type="match status" value="1"/>
</dbReference>
<dbReference type="FunFam" id="3.40.228.10:FF:000001">
    <property type="entry name" value="Periplasmic nitrate reductase"/>
    <property type="match status" value="1"/>
</dbReference>
<dbReference type="Gene3D" id="2.40.40.20">
    <property type="match status" value="1"/>
</dbReference>
<dbReference type="Gene3D" id="3.30.200.210">
    <property type="match status" value="1"/>
</dbReference>
<dbReference type="Gene3D" id="3.40.50.740">
    <property type="match status" value="1"/>
</dbReference>
<dbReference type="Gene3D" id="3.40.228.10">
    <property type="entry name" value="Dimethylsulfoxide Reductase, domain 2"/>
    <property type="match status" value="1"/>
</dbReference>
<dbReference type="HAMAP" id="MF_01630">
    <property type="entry name" value="Nitrate_reduct_NapA"/>
    <property type="match status" value="1"/>
</dbReference>
<dbReference type="InterPro" id="IPR009010">
    <property type="entry name" value="Asp_de-COase-like_dom_sf"/>
</dbReference>
<dbReference type="InterPro" id="IPR041957">
    <property type="entry name" value="CT_Nitrate-R-NapA-like"/>
</dbReference>
<dbReference type="InterPro" id="IPR006657">
    <property type="entry name" value="MoPterin_dinucl-bd_dom"/>
</dbReference>
<dbReference type="InterPro" id="IPR006656">
    <property type="entry name" value="Mopterin_OxRdtase"/>
</dbReference>
<dbReference type="InterPro" id="IPR006963">
    <property type="entry name" value="Mopterin_OxRdtase_4Fe-4S_dom"/>
</dbReference>
<dbReference type="InterPro" id="IPR027467">
    <property type="entry name" value="MopterinOxRdtase_cofactor_BS"/>
</dbReference>
<dbReference type="InterPro" id="IPR010051">
    <property type="entry name" value="Periplasm_NO3_reductase_lsu"/>
</dbReference>
<dbReference type="InterPro" id="IPR050123">
    <property type="entry name" value="Prok_molybdopt-oxidoreductase"/>
</dbReference>
<dbReference type="InterPro" id="IPR006311">
    <property type="entry name" value="TAT_signal"/>
</dbReference>
<dbReference type="InterPro" id="IPR019546">
    <property type="entry name" value="TAT_signal_bac_arc"/>
</dbReference>
<dbReference type="NCBIfam" id="TIGR01706">
    <property type="entry name" value="NAPA"/>
    <property type="match status" value="1"/>
</dbReference>
<dbReference type="NCBIfam" id="NF010055">
    <property type="entry name" value="PRK13532.1"/>
    <property type="match status" value="1"/>
</dbReference>
<dbReference type="NCBIfam" id="TIGR01409">
    <property type="entry name" value="TAT_signal_seq"/>
    <property type="match status" value="1"/>
</dbReference>
<dbReference type="PANTHER" id="PTHR43105:SF11">
    <property type="entry name" value="PERIPLASMIC NITRATE REDUCTASE"/>
    <property type="match status" value="1"/>
</dbReference>
<dbReference type="PANTHER" id="PTHR43105">
    <property type="entry name" value="RESPIRATORY NITRATE REDUCTASE"/>
    <property type="match status" value="1"/>
</dbReference>
<dbReference type="Pfam" id="PF04879">
    <property type="entry name" value="Molybdop_Fe4S4"/>
    <property type="match status" value="1"/>
</dbReference>
<dbReference type="Pfam" id="PF00384">
    <property type="entry name" value="Molybdopterin"/>
    <property type="match status" value="1"/>
</dbReference>
<dbReference type="Pfam" id="PF01568">
    <property type="entry name" value="Molydop_binding"/>
    <property type="match status" value="1"/>
</dbReference>
<dbReference type="SMART" id="SM00926">
    <property type="entry name" value="Molybdop_Fe4S4"/>
    <property type="match status" value="1"/>
</dbReference>
<dbReference type="SUPFAM" id="SSF50692">
    <property type="entry name" value="ADC-like"/>
    <property type="match status" value="1"/>
</dbReference>
<dbReference type="SUPFAM" id="SSF53706">
    <property type="entry name" value="Formate dehydrogenase/DMSO reductase, domains 1-3"/>
    <property type="match status" value="1"/>
</dbReference>
<dbReference type="PROSITE" id="PS51669">
    <property type="entry name" value="4FE4S_MOW_BIS_MGD"/>
    <property type="match status" value="1"/>
</dbReference>
<dbReference type="PROSITE" id="PS00551">
    <property type="entry name" value="MOLYBDOPTERIN_PROK_1"/>
    <property type="match status" value="1"/>
</dbReference>
<dbReference type="PROSITE" id="PS51318">
    <property type="entry name" value="TAT"/>
    <property type="match status" value="1"/>
</dbReference>
<protein>
    <recommendedName>
        <fullName evidence="1">Periplasmic nitrate reductase</fullName>
        <ecNumber evidence="1">1.9.6.1</ecNumber>
    </recommendedName>
</protein>
<reference key="1">
    <citation type="journal article" date="2002" name="Proc. Natl. Acad. Sci. U.S.A.">
        <title>Extensive mosaic structure revealed by the complete genome sequence of uropathogenic Escherichia coli.</title>
        <authorList>
            <person name="Welch R.A."/>
            <person name="Burland V."/>
            <person name="Plunkett G. III"/>
            <person name="Redford P."/>
            <person name="Roesch P."/>
            <person name="Rasko D."/>
            <person name="Buckles E.L."/>
            <person name="Liou S.-R."/>
            <person name="Boutin A."/>
            <person name="Hackett J."/>
            <person name="Stroud D."/>
            <person name="Mayhew G.F."/>
            <person name="Rose D.J."/>
            <person name="Zhou S."/>
            <person name="Schwartz D.C."/>
            <person name="Perna N.T."/>
            <person name="Mobley H.L.T."/>
            <person name="Donnenberg M.S."/>
            <person name="Blattner F.R."/>
        </authorList>
    </citation>
    <scope>NUCLEOTIDE SEQUENCE [LARGE SCALE GENOMIC DNA]</scope>
    <source>
        <strain>CFT073 / ATCC 700928 / UPEC</strain>
    </source>
</reference>
<accession>Q8CVW4</accession>
<comment type="function">
    <text evidence="1">Catalytic subunit of the periplasmic nitrate reductase complex NapAB. Receives electrons from NapB and catalyzes the reduction of nitrate to nitrite.</text>
</comment>
<comment type="catalytic activity">
    <reaction evidence="1">
        <text>2 Fe(II)-[cytochrome] + nitrate + 2 H(+) = 2 Fe(III)-[cytochrome] + nitrite + H2O</text>
        <dbReference type="Rhea" id="RHEA:12909"/>
        <dbReference type="Rhea" id="RHEA-COMP:11777"/>
        <dbReference type="Rhea" id="RHEA-COMP:11778"/>
        <dbReference type="ChEBI" id="CHEBI:15377"/>
        <dbReference type="ChEBI" id="CHEBI:15378"/>
        <dbReference type="ChEBI" id="CHEBI:16301"/>
        <dbReference type="ChEBI" id="CHEBI:17632"/>
        <dbReference type="ChEBI" id="CHEBI:29033"/>
        <dbReference type="ChEBI" id="CHEBI:29034"/>
        <dbReference type="EC" id="1.9.6.1"/>
    </reaction>
</comment>
<comment type="cofactor">
    <cofactor evidence="1">
        <name>[4Fe-4S] cluster</name>
        <dbReference type="ChEBI" id="CHEBI:49883"/>
    </cofactor>
    <text evidence="1">Binds 1 [4Fe-4S] cluster.</text>
</comment>
<comment type="cofactor">
    <cofactor evidence="1">
        <name>Mo-bis(molybdopterin guanine dinucleotide)</name>
        <dbReference type="ChEBI" id="CHEBI:60539"/>
    </cofactor>
    <text evidence="1">Binds 1 molybdenum-bis(molybdopterin guanine dinucleotide) (Mo-bis-MGD) cofactor per subunit.</text>
</comment>
<comment type="subunit">
    <text evidence="1">Component of the periplasmic nitrate reductase NapAB complex composed of NapA and NapB.</text>
</comment>
<comment type="subcellular location">
    <subcellularLocation>
        <location evidence="1">Periplasm</location>
    </subcellularLocation>
</comment>
<comment type="PTM">
    <text evidence="1">Predicted to be exported by the Tat system. The position of the signal peptide cleavage has not been experimentally proven.</text>
</comment>
<comment type="similarity">
    <text evidence="1 2">Belongs to the prokaryotic molybdopterin-containing oxidoreductase family. NasA/NapA/NarB subfamily.</text>
</comment>
<keyword id="KW-0004">4Fe-4S</keyword>
<keyword id="KW-0249">Electron transport</keyword>
<keyword id="KW-0408">Iron</keyword>
<keyword id="KW-0411">Iron-sulfur</keyword>
<keyword id="KW-0479">Metal-binding</keyword>
<keyword id="KW-0500">Molybdenum</keyword>
<keyword id="KW-0534">Nitrate assimilation</keyword>
<keyword id="KW-0560">Oxidoreductase</keyword>
<keyword id="KW-0574">Periplasm</keyword>
<keyword id="KW-1185">Reference proteome</keyword>
<keyword id="KW-0732">Signal</keyword>
<keyword id="KW-0813">Transport</keyword>
<gene>
    <name evidence="1" type="primary">napA</name>
    <name type="ordered locus">c2745</name>
</gene>